<gene>
    <name type="ordered locus">PBPRA3489</name>
</gene>
<feature type="chain" id="PRO_0000200991" description="UPF0761 membrane protein PBPRA3489">
    <location>
        <begin position="1"/>
        <end position="319"/>
    </location>
</feature>
<feature type="transmembrane region" description="Helical" evidence="1">
    <location>
        <begin position="50"/>
        <end position="70"/>
    </location>
</feature>
<feature type="transmembrane region" description="Helical" evidence="1">
    <location>
        <begin position="107"/>
        <end position="127"/>
    </location>
</feature>
<feature type="transmembrane region" description="Helical" evidence="1">
    <location>
        <begin position="143"/>
        <end position="163"/>
    </location>
</feature>
<feature type="transmembrane region" description="Helical" evidence="1">
    <location>
        <begin position="188"/>
        <end position="208"/>
    </location>
</feature>
<feature type="transmembrane region" description="Helical" evidence="1">
    <location>
        <begin position="215"/>
        <end position="235"/>
    </location>
</feature>
<feature type="transmembrane region" description="Helical" evidence="1">
    <location>
        <begin position="249"/>
        <end position="269"/>
    </location>
</feature>
<name>Y3489_PHOPR</name>
<comment type="subcellular location">
    <subcellularLocation>
        <location evidence="1">Cell inner membrane</location>
        <topology evidence="1">Multi-pass membrane protein</topology>
    </subcellularLocation>
</comment>
<comment type="similarity">
    <text evidence="1">Belongs to the UPF0761 family.</text>
</comment>
<sequence length="319" mass="34953">MAENKITGKVHFLQCLKQTIAYLTYLNRRIKHDRLTIAAGSMAYVTLLSLVPMITVVLAALSAFPVFAGLGELLQNFVIENFVPAAGEVVKTYLNEFVANAGKMTAVGIGALFVVAMMLMSSIDHALNYIWRVHEKRRPVISFSIYWMVLTLGPILVGSSIAVSSYLGSLNLLNSEAVNGLFQQTLRALPVIMSSSAFLGLYLLVPNLKVKFSHALLGALVASSLFELSKKGFALYISNFPSYQVIYGALAVIPILFVWVYLCWCIVLLGAEITASLGERKQWQLSSGEPITSKDCDVKVMAKNEQEKSSEAENNKGTK</sequence>
<accession>Q6LLR8</accession>
<organism>
    <name type="scientific">Photobacterium profundum (strain SS9)</name>
    <dbReference type="NCBI Taxonomy" id="298386"/>
    <lineage>
        <taxon>Bacteria</taxon>
        <taxon>Pseudomonadati</taxon>
        <taxon>Pseudomonadota</taxon>
        <taxon>Gammaproteobacteria</taxon>
        <taxon>Vibrionales</taxon>
        <taxon>Vibrionaceae</taxon>
        <taxon>Photobacterium</taxon>
    </lineage>
</organism>
<proteinExistence type="inferred from homology"/>
<protein>
    <recommendedName>
        <fullName evidence="1">UPF0761 membrane protein PBPRA3489</fullName>
    </recommendedName>
</protein>
<reference key="1">
    <citation type="journal article" date="2005" name="Science">
        <title>Life at depth: Photobacterium profundum genome sequence and expression analysis.</title>
        <authorList>
            <person name="Vezzi A."/>
            <person name="Campanaro S."/>
            <person name="D'Angelo M."/>
            <person name="Simonato F."/>
            <person name="Vitulo N."/>
            <person name="Lauro F.M."/>
            <person name="Cestaro A."/>
            <person name="Malacrida G."/>
            <person name="Simionati B."/>
            <person name="Cannata N."/>
            <person name="Romualdi C."/>
            <person name="Bartlett D.H."/>
            <person name="Valle G."/>
        </authorList>
    </citation>
    <scope>NUCLEOTIDE SEQUENCE [LARGE SCALE GENOMIC DNA]</scope>
    <source>
        <strain>ATCC BAA-1253 / SS9</strain>
    </source>
</reference>
<keyword id="KW-0997">Cell inner membrane</keyword>
<keyword id="KW-1003">Cell membrane</keyword>
<keyword id="KW-0472">Membrane</keyword>
<keyword id="KW-1185">Reference proteome</keyword>
<keyword id="KW-0812">Transmembrane</keyword>
<keyword id="KW-1133">Transmembrane helix</keyword>
<evidence type="ECO:0000255" key="1">
    <source>
        <dbReference type="HAMAP-Rule" id="MF_00672"/>
    </source>
</evidence>
<dbReference type="EMBL" id="CR378674">
    <property type="protein sequence ID" value="CAG21760.1"/>
    <property type="molecule type" value="Genomic_DNA"/>
</dbReference>
<dbReference type="RefSeq" id="WP_011220001.1">
    <property type="nucleotide sequence ID" value="NC_006370.1"/>
</dbReference>
<dbReference type="STRING" id="298386.PBPRA3489"/>
<dbReference type="KEGG" id="ppr:PBPRA3489"/>
<dbReference type="eggNOG" id="COG1295">
    <property type="taxonomic scope" value="Bacteria"/>
</dbReference>
<dbReference type="HOGENOM" id="CLU_032288_0_0_6"/>
<dbReference type="Proteomes" id="UP000000593">
    <property type="component" value="Chromosome 1"/>
</dbReference>
<dbReference type="GO" id="GO:0005886">
    <property type="term" value="C:plasma membrane"/>
    <property type="evidence" value="ECO:0007669"/>
    <property type="project" value="UniProtKB-SubCell"/>
</dbReference>
<dbReference type="HAMAP" id="MF_00672">
    <property type="entry name" value="UPF0761"/>
    <property type="match status" value="1"/>
</dbReference>
<dbReference type="InterPro" id="IPR023679">
    <property type="entry name" value="UPF0761_bac"/>
</dbReference>
<dbReference type="InterPro" id="IPR017039">
    <property type="entry name" value="Virul_fac_BrkB"/>
</dbReference>
<dbReference type="NCBIfam" id="NF002457">
    <property type="entry name" value="PRK01637.1"/>
    <property type="match status" value="1"/>
</dbReference>
<dbReference type="NCBIfam" id="TIGR00765">
    <property type="entry name" value="yihY_not_rbn"/>
    <property type="match status" value="1"/>
</dbReference>
<dbReference type="PANTHER" id="PTHR30213">
    <property type="entry name" value="INNER MEMBRANE PROTEIN YHJD"/>
    <property type="match status" value="1"/>
</dbReference>
<dbReference type="PANTHER" id="PTHR30213:SF0">
    <property type="entry name" value="UPF0761 MEMBRANE PROTEIN YIHY"/>
    <property type="match status" value="1"/>
</dbReference>
<dbReference type="Pfam" id="PF03631">
    <property type="entry name" value="Virul_fac_BrkB"/>
    <property type="match status" value="1"/>
</dbReference>
<dbReference type="PIRSF" id="PIRSF035875">
    <property type="entry name" value="RNase_BN"/>
    <property type="match status" value="1"/>
</dbReference>